<comment type="function">
    <text evidence="1">Involved in the import of serine and threonine into the cell, with the concomitant import of sodium (symport system).</text>
</comment>
<comment type="catalytic activity">
    <reaction evidence="1">
        <text>L-serine(in) + Na(+)(in) = L-serine(out) + Na(+)(out)</text>
        <dbReference type="Rhea" id="RHEA:29575"/>
        <dbReference type="ChEBI" id="CHEBI:29101"/>
        <dbReference type="ChEBI" id="CHEBI:33384"/>
    </reaction>
    <physiologicalReaction direction="right-to-left" evidence="1">
        <dbReference type="Rhea" id="RHEA:29577"/>
    </physiologicalReaction>
</comment>
<comment type="catalytic activity">
    <reaction evidence="1">
        <text>L-threonine(in) + Na(+)(in) = L-threonine(out) + Na(+)(out)</text>
        <dbReference type="Rhea" id="RHEA:69999"/>
        <dbReference type="ChEBI" id="CHEBI:29101"/>
        <dbReference type="ChEBI" id="CHEBI:57926"/>
    </reaction>
    <physiologicalReaction direction="right-to-left" evidence="1">
        <dbReference type="Rhea" id="RHEA:70001"/>
    </physiologicalReaction>
</comment>
<comment type="subcellular location">
    <subcellularLocation>
        <location evidence="1">Cell inner membrane</location>
        <topology evidence="1">Multi-pass membrane protein</topology>
    </subcellularLocation>
</comment>
<comment type="similarity">
    <text evidence="1">Belongs to the dicarboxylate/amino acid:cation symporter (DAACS) (TC 2.A.23) family.</text>
</comment>
<dbReference type="EMBL" id="AE005174">
    <property type="protein sequence ID" value="AAG58222.1"/>
    <property type="molecule type" value="Genomic_DNA"/>
</dbReference>
<dbReference type="EMBL" id="BA000007">
    <property type="protein sequence ID" value="BAB37394.1"/>
    <property type="molecule type" value="Genomic_DNA"/>
</dbReference>
<dbReference type="PIR" id="B85970">
    <property type="entry name" value="B85970"/>
</dbReference>
<dbReference type="PIR" id="C91125">
    <property type="entry name" value="C91125"/>
</dbReference>
<dbReference type="RefSeq" id="NP_311998.1">
    <property type="nucleotide sequence ID" value="NC_002695.1"/>
</dbReference>
<dbReference type="RefSeq" id="WP_000211655.1">
    <property type="nucleotide sequence ID" value="NZ_VOAI01000009.1"/>
</dbReference>
<dbReference type="SMR" id="P0AGE5"/>
<dbReference type="STRING" id="155864.Z4442"/>
<dbReference type="GeneID" id="916190"/>
<dbReference type="GeneID" id="93778898"/>
<dbReference type="KEGG" id="ece:Z4442"/>
<dbReference type="KEGG" id="ecs:ECs_3971"/>
<dbReference type="PATRIC" id="fig|386585.9.peg.4145"/>
<dbReference type="eggNOG" id="COG3633">
    <property type="taxonomic scope" value="Bacteria"/>
</dbReference>
<dbReference type="HOGENOM" id="CLU_044581_0_0_6"/>
<dbReference type="OMA" id="YIGILTW"/>
<dbReference type="Proteomes" id="UP000000558">
    <property type="component" value="Chromosome"/>
</dbReference>
<dbReference type="Proteomes" id="UP000002519">
    <property type="component" value="Chromosome"/>
</dbReference>
<dbReference type="GO" id="GO:0005886">
    <property type="term" value="C:plasma membrane"/>
    <property type="evidence" value="ECO:0007669"/>
    <property type="project" value="UniProtKB-SubCell"/>
</dbReference>
<dbReference type="GO" id="GO:0005295">
    <property type="term" value="F:neutral L-amino acid:sodium symporter activity"/>
    <property type="evidence" value="ECO:0007669"/>
    <property type="project" value="TreeGrafter"/>
</dbReference>
<dbReference type="GO" id="GO:0032329">
    <property type="term" value="P:serine transport"/>
    <property type="evidence" value="ECO:0007669"/>
    <property type="project" value="InterPro"/>
</dbReference>
<dbReference type="GO" id="GO:0015826">
    <property type="term" value="P:threonine transport"/>
    <property type="evidence" value="ECO:0007669"/>
    <property type="project" value="InterPro"/>
</dbReference>
<dbReference type="FunFam" id="1.10.3860.10:FF:000003">
    <property type="entry name" value="Serine/threonine transporter sstT"/>
    <property type="match status" value="1"/>
</dbReference>
<dbReference type="Gene3D" id="1.10.3860.10">
    <property type="entry name" value="Sodium:dicarboxylate symporter"/>
    <property type="match status" value="1"/>
</dbReference>
<dbReference type="HAMAP" id="MF_01582">
    <property type="entry name" value="Ser_Thr_transp_SstT"/>
    <property type="match status" value="1"/>
</dbReference>
<dbReference type="InterPro" id="IPR001991">
    <property type="entry name" value="Na-dicarboxylate_symporter"/>
</dbReference>
<dbReference type="InterPro" id="IPR036458">
    <property type="entry name" value="Na:dicarbo_symporter_sf"/>
</dbReference>
<dbReference type="InterPro" id="IPR023025">
    <property type="entry name" value="Ser_Thr_transp_SstT"/>
</dbReference>
<dbReference type="NCBIfam" id="NF010151">
    <property type="entry name" value="PRK13628.1"/>
    <property type="match status" value="1"/>
</dbReference>
<dbReference type="PANTHER" id="PTHR42865">
    <property type="entry name" value="PROTON/GLUTAMATE-ASPARTATE SYMPORTER"/>
    <property type="match status" value="1"/>
</dbReference>
<dbReference type="PANTHER" id="PTHR42865:SF8">
    <property type="entry name" value="SERINE_THREONINE TRANSPORTER SSTT"/>
    <property type="match status" value="1"/>
</dbReference>
<dbReference type="Pfam" id="PF00375">
    <property type="entry name" value="SDF"/>
    <property type="match status" value="1"/>
</dbReference>
<dbReference type="PRINTS" id="PR00173">
    <property type="entry name" value="EDTRNSPORT"/>
</dbReference>
<dbReference type="SUPFAM" id="SSF118215">
    <property type="entry name" value="Proton glutamate symport protein"/>
    <property type="match status" value="1"/>
</dbReference>
<dbReference type="PROSITE" id="PS00713">
    <property type="entry name" value="NA_DICARBOXYL_SYMP_1"/>
    <property type="match status" value="1"/>
</dbReference>
<name>SSTT_ECO57</name>
<feature type="initiator methionine" description="Removed" evidence="1">
    <location>
        <position position="1"/>
    </location>
</feature>
<feature type="chain" id="PRO_0000202119" description="Serine/threonine transporter SstT">
    <location>
        <begin position="2"/>
        <end position="414"/>
    </location>
</feature>
<feature type="topological domain" description="Cytoplasmic" evidence="1">
    <location>
        <begin position="2"/>
        <end position="15"/>
    </location>
</feature>
<feature type="transmembrane region" description="Helical" evidence="1">
    <location>
        <begin position="16"/>
        <end position="36"/>
    </location>
</feature>
<feature type="topological domain" description="Periplasmic" evidence="1">
    <location>
        <begin position="37"/>
        <end position="45"/>
    </location>
</feature>
<feature type="transmembrane region" description="Helical" evidence="1">
    <location>
        <begin position="46"/>
        <end position="66"/>
    </location>
</feature>
<feature type="topological domain" description="Cytoplasmic" evidence="1">
    <location>
        <begin position="67"/>
        <end position="83"/>
    </location>
</feature>
<feature type="transmembrane region" description="Helical" evidence="1">
    <location>
        <begin position="84"/>
        <end position="104"/>
    </location>
</feature>
<feature type="topological domain" description="Periplasmic" evidence="1">
    <location>
        <begin position="105"/>
        <end position="142"/>
    </location>
</feature>
<feature type="transmembrane region" description="Helical" evidence="1">
    <location>
        <begin position="143"/>
        <end position="163"/>
    </location>
</feature>
<feature type="topological domain" description="Cytoplasmic" evidence="1">
    <location>
        <begin position="164"/>
        <end position="179"/>
    </location>
</feature>
<feature type="transmembrane region" description="Helical" evidence="1">
    <location>
        <begin position="180"/>
        <end position="200"/>
    </location>
</feature>
<feature type="topological domain" description="Periplasmic" evidence="1">
    <location>
        <begin position="201"/>
        <end position="217"/>
    </location>
</feature>
<feature type="transmembrane region" description="Helical" evidence="1">
    <location>
        <begin position="218"/>
        <end position="238"/>
    </location>
</feature>
<feature type="topological domain" description="Cytoplasmic" evidence="1">
    <location>
        <begin position="239"/>
        <end position="299"/>
    </location>
</feature>
<feature type="transmembrane region" description="Helical" evidence="1">
    <location>
        <begin position="300"/>
        <end position="320"/>
    </location>
</feature>
<feature type="topological domain" description="Periplasmic" evidence="1">
    <location>
        <begin position="321"/>
        <end position="331"/>
    </location>
</feature>
<feature type="transmembrane region" description="Helical" evidence="1">
    <location>
        <begin position="332"/>
        <end position="352"/>
    </location>
</feature>
<feature type="topological domain" description="Cytoplasmic" evidence="1">
    <location>
        <begin position="353"/>
        <end position="414"/>
    </location>
</feature>
<accession>P0AGE5</accession>
<accession>P42602</accession>
<reference key="1">
    <citation type="journal article" date="2001" name="Nature">
        <title>Genome sequence of enterohaemorrhagic Escherichia coli O157:H7.</title>
        <authorList>
            <person name="Perna N.T."/>
            <person name="Plunkett G. III"/>
            <person name="Burland V."/>
            <person name="Mau B."/>
            <person name="Glasner J.D."/>
            <person name="Rose D.J."/>
            <person name="Mayhew G.F."/>
            <person name="Evans P.S."/>
            <person name="Gregor J."/>
            <person name="Kirkpatrick H.A."/>
            <person name="Posfai G."/>
            <person name="Hackett J."/>
            <person name="Klink S."/>
            <person name="Boutin A."/>
            <person name="Shao Y."/>
            <person name="Miller L."/>
            <person name="Grotbeck E.J."/>
            <person name="Davis N.W."/>
            <person name="Lim A."/>
            <person name="Dimalanta E.T."/>
            <person name="Potamousis K."/>
            <person name="Apodaca J."/>
            <person name="Anantharaman T.S."/>
            <person name="Lin J."/>
            <person name="Yen G."/>
            <person name="Schwartz D.C."/>
            <person name="Welch R.A."/>
            <person name="Blattner F.R."/>
        </authorList>
    </citation>
    <scope>NUCLEOTIDE SEQUENCE [LARGE SCALE GENOMIC DNA]</scope>
    <source>
        <strain>O157:H7 / EDL933 / ATCC 700927 / EHEC</strain>
    </source>
</reference>
<reference key="2">
    <citation type="journal article" date="2001" name="DNA Res.">
        <title>Complete genome sequence of enterohemorrhagic Escherichia coli O157:H7 and genomic comparison with a laboratory strain K-12.</title>
        <authorList>
            <person name="Hayashi T."/>
            <person name="Makino K."/>
            <person name="Ohnishi M."/>
            <person name="Kurokawa K."/>
            <person name="Ishii K."/>
            <person name="Yokoyama K."/>
            <person name="Han C.-G."/>
            <person name="Ohtsubo E."/>
            <person name="Nakayama K."/>
            <person name="Murata T."/>
            <person name="Tanaka M."/>
            <person name="Tobe T."/>
            <person name="Iida T."/>
            <person name="Takami H."/>
            <person name="Honda T."/>
            <person name="Sasakawa C."/>
            <person name="Ogasawara N."/>
            <person name="Yasunaga T."/>
            <person name="Kuhara S."/>
            <person name="Shiba T."/>
            <person name="Hattori M."/>
            <person name="Shinagawa H."/>
        </authorList>
    </citation>
    <scope>NUCLEOTIDE SEQUENCE [LARGE SCALE GENOMIC DNA]</scope>
    <source>
        <strain>O157:H7 / Sakai / RIMD 0509952 / EHEC</strain>
    </source>
</reference>
<evidence type="ECO:0000255" key="1">
    <source>
        <dbReference type="HAMAP-Rule" id="MF_01582"/>
    </source>
</evidence>
<protein>
    <recommendedName>
        <fullName evidence="1">Serine/threonine transporter SstT</fullName>
    </recommendedName>
    <alternativeName>
        <fullName evidence="1">Na(+)/serine-threonine symporter</fullName>
    </alternativeName>
</protein>
<proteinExistence type="inferred from homology"/>
<organism>
    <name type="scientific">Escherichia coli O157:H7</name>
    <dbReference type="NCBI Taxonomy" id="83334"/>
    <lineage>
        <taxon>Bacteria</taxon>
        <taxon>Pseudomonadati</taxon>
        <taxon>Pseudomonadota</taxon>
        <taxon>Gammaproteobacteria</taxon>
        <taxon>Enterobacterales</taxon>
        <taxon>Enterobacteriaceae</taxon>
        <taxon>Escherichia</taxon>
    </lineage>
</organism>
<gene>
    <name evidence="1" type="primary">sstT</name>
    <name type="ordered locus">Z4442</name>
    <name type="ordered locus">ECs3971</name>
</gene>
<sequence>MTTQRSPGLFRRLAHGSLVKQILVGLVLGILLAWISKPAAEAVGLLGTLFVGALKAVAPILVLMLVMASIANHQHGQKTNIRPILFLYLLGTFSAALAAVVFSFAFPSTLHLSSSAGDISPPSGIVEVMRGLVMSMVSNPIDALLKGNYIGILVWAIGLGFALRHGNETTKNLVNDMSNAVTFMVKLVIRFAPIGIFGLVSSTLATTGFSTLWGYAQLLVVLVGCMLLVALVVNPLLVWWKIRRNPFPLVLLCLRESGVYAFFTRSSAANIPVNMALCEKLNLDRDTYSVSIPLGATINMAGAAITITVLTLAAVNTLGIPVDLPTALLLSVVASLCACGASGVAGGSLLLIPLACNMFGISNDIAMQVVAVGFIIGVLQDSCETALNSSTDVLFTAAACQAEDDRLANSALRN</sequence>
<keyword id="KW-0029">Amino-acid transport</keyword>
<keyword id="KW-0997">Cell inner membrane</keyword>
<keyword id="KW-1003">Cell membrane</keyword>
<keyword id="KW-0472">Membrane</keyword>
<keyword id="KW-1185">Reference proteome</keyword>
<keyword id="KW-0769">Symport</keyword>
<keyword id="KW-0812">Transmembrane</keyword>
<keyword id="KW-1133">Transmembrane helix</keyword>
<keyword id="KW-0813">Transport</keyword>